<reference key="1">
    <citation type="submission" date="2002-02" db="EMBL/GenBank/DDBJ databases">
        <title>Nucleotide sequence and expression study of an mRNA from Elaeis oleifera which encodes for a protein similar to nitrate-induced NOI protein.</title>
        <authorList>
            <person name="Bhore S.J."/>
            <person name="Shah F.H."/>
        </authorList>
    </citation>
    <scope>NUCLEOTIDE SEQUENCE [MRNA]</scope>
</reference>
<evidence type="ECO:0000256" key="1">
    <source>
        <dbReference type="SAM" id="MobiDB-lite"/>
    </source>
</evidence>
<evidence type="ECO:0000305" key="2"/>
<dbReference type="EMBL" id="AF481925">
    <property type="protein sequence ID" value="AAL87238.1"/>
    <property type="molecule type" value="mRNA"/>
</dbReference>
<protein>
    <recommendedName>
        <fullName>NOI-like protein</fullName>
    </recommendedName>
</protein>
<proteinExistence type="evidence at transcript level"/>
<name>NOIL_ELAOL</name>
<comment type="similarity">
    <text evidence="2">Belongs to the RIN4 family.</text>
</comment>
<accession>Q8S3M3</accession>
<feature type="chain" id="PRO_0000221388" description="NOI-like protein">
    <location>
        <begin position="1"/>
        <end position="228"/>
    </location>
</feature>
<feature type="region of interest" description="Disordered" evidence="1">
    <location>
        <begin position="56"/>
        <end position="87"/>
    </location>
</feature>
<feature type="region of interest" description="Disordered" evidence="1">
    <location>
        <begin position="99"/>
        <end position="133"/>
    </location>
</feature>
<feature type="compositionally biased region" description="Basic and acidic residues" evidence="1">
    <location>
        <begin position="56"/>
        <end position="75"/>
    </location>
</feature>
<feature type="compositionally biased region" description="Basic residues" evidence="1">
    <location>
        <begin position="76"/>
        <end position="86"/>
    </location>
</feature>
<feature type="compositionally biased region" description="Polar residues" evidence="1">
    <location>
        <begin position="118"/>
        <end position="133"/>
    </location>
</feature>
<organism>
    <name type="scientific">Elaeis oleifera</name>
    <name type="common">American oil palm</name>
    <name type="synonym">Corozo oleifera</name>
    <dbReference type="NCBI Taxonomy" id="80265"/>
    <lineage>
        <taxon>Eukaryota</taxon>
        <taxon>Viridiplantae</taxon>
        <taxon>Streptophyta</taxon>
        <taxon>Embryophyta</taxon>
        <taxon>Tracheophyta</taxon>
        <taxon>Spermatophyta</taxon>
        <taxon>Magnoliopsida</taxon>
        <taxon>Liliopsida</taxon>
        <taxon>Arecaceae</taxon>
        <taxon>Arecoideae</taxon>
        <taxon>Cocoseae</taxon>
        <taxon>Elaeidinae</taxon>
        <taxon>Elaeis</taxon>
    </lineage>
</organism>
<sequence>MAQPAHVPKFGNWDGENISYTTYFETVHRDKGDGSKIFNPNDPEENPQAFYPRTVAQDHQHSEKHHNDTSTDYHVVKQHRRKHHRREDREFHRYVEAPRPHRSPFQGVDMDSHRSRNHGTSATMSSSVKRNSDNWLPQHQHHRRTNKDLAEGKSWLFTTTTASSYTKSRKLSRECSSTTQSSISAKNLVPGDETRSPISWRVFQSYLTKLKEQKQIAATKIGQHLNLR</sequence>